<sequence length="742" mass="80372">MAQYTVDSFIVELGFSEKVVKGLQRVEKMSMQAAQRIERNINKAFDVKPNKSSQEALNRIVKNAQSASGRINKALNSSFNLDSQGVKSLKKLETQAKKTAKGINKSLKDAMKVDGKITIKTGRGRGGQSIPPVGGGAPRGQRVDVAQRQMERMFNNNFYSGLTRRLETIGGQGNQMAASFRGSLQNIYNRYKGTGKVGEYEMEVKKLIDVTKRWVIAENARLKSVKESAWLQDRANASLRQLVGGFVSAYALLELSQKTIEAGVKRQSAQLASTAIFGADTQQARMFAASFAHQIGQNYTDTMKQYSNFAAGAQPTLGFQGTQEFYKNAAMFARIRGATDEDLKGIMVAFQQMASKGKIQAEELRGQLGDRLAGAVQLFADAIGKTPQELDKLMKDGKLLAQDVLPKVSERMAELVKQAGGMNAVSKQTATSMGQAKAMWDNTLVALFNNSSEGISQLSNSVAMFLQGSMGSTQALGLVIGNLLKGAGNLLDFVTDFMYRTSALYYYARAWYKDLDNSQQKLIKSAGEFLGTVVTIGGAVAVVSKSVKLLSGLVGGGIFGKILQRLGVSAAGTAAAGEAAAAAGGVTATRMALGTVGSALMLRGSTDPNAAKNYSEVTLPKPFENAVANITNPKRPMFFDENGQLQFAQYTQDVEGNRKLIDNGLSNWEIIMEKLSTSIDNFANKFNQTPMMMTPSGLPMQTKQTLNVTFNLDGKQIATKMVDITDKNQEDILLSSSYPEEE</sequence>
<dbReference type="EMBL" id="AF320576">
    <property type="protein sequence ID" value="AAQ14794.1"/>
    <property type="molecule type" value="Genomic_DNA"/>
</dbReference>
<dbReference type="RefSeq" id="NP_944901.1">
    <property type="nucleotide sequence ID" value="NC_005282.1"/>
</dbReference>
<dbReference type="SMR" id="Q6KGH8"/>
<dbReference type="GeneID" id="2744053"/>
<dbReference type="KEGG" id="vg:2744053"/>
<dbReference type="Proteomes" id="UP000009070">
    <property type="component" value="Segment"/>
</dbReference>
<dbReference type="GO" id="GO:0098003">
    <property type="term" value="P:viral tail assembly"/>
    <property type="evidence" value="ECO:0007669"/>
    <property type="project" value="UniProtKB-KW"/>
</dbReference>
<dbReference type="InterPro" id="IPR013491">
    <property type="entry name" value="Tape_meas_N"/>
</dbReference>
<dbReference type="NCBIfam" id="TIGR02675">
    <property type="entry name" value="tape_meas_nterm"/>
    <property type="match status" value="1"/>
</dbReference>
<dbReference type="Pfam" id="PF20155">
    <property type="entry name" value="TMP_3"/>
    <property type="match status" value="1"/>
</dbReference>
<feature type="chain" id="PRO_0000431941" description="Probable tape measure protein">
    <location>
        <begin position="1"/>
        <end position="742"/>
    </location>
</feature>
<feature type="region of interest" description="Disordered" evidence="2">
    <location>
        <begin position="120"/>
        <end position="140"/>
    </location>
</feature>
<protein>
    <recommendedName>
        <fullName evidence="3">Probable tape measure protein</fullName>
        <shortName>TMP</shortName>
    </recommendedName>
</protein>
<comment type="function">
    <text evidence="1">Serves as a base for tail tube protein polymerization and acts as a template for tail length determination.</text>
</comment>
<comment type="similarity">
    <text evidence="3">Belongs to the Mulikevirus tape measure protein family.</text>
</comment>
<keyword id="KW-0175">Coiled coil</keyword>
<keyword id="KW-1185">Reference proteome</keyword>
<keyword id="KW-1188">Viral release from host cell</keyword>
<keyword id="KW-1245">Viral tail assembly</keyword>
<accession>Q6KGH8</accession>
<proteinExistence type="inferred from homology"/>
<name>TMP_BPFO1</name>
<organism evidence="5">
    <name type="scientific">Salmonella phage Felix O1 (isolate Felix O1-VT1)</name>
    <name type="common">Bacteriophage Felix O1</name>
    <dbReference type="NCBI Taxonomy" id="1283336"/>
    <lineage>
        <taxon>Viruses</taxon>
        <taxon>Duplodnaviria</taxon>
        <taxon>Heunggongvirae</taxon>
        <taxon>Uroviricota</taxon>
        <taxon>Caudoviricetes</taxon>
        <taxon>Ounavirinae</taxon>
        <taxon>Felixounavirus</taxon>
        <taxon>Felixounavirus felixO1</taxon>
    </lineage>
</organism>
<organismHost>
    <name type="scientific">Salmonella</name>
    <dbReference type="NCBI Taxonomy" id="590"/>
</organismHost>
<evidence type="ECO:0000250" key="1">
    <source>
        <dbReference type="UniProtKB" id="Q9T1V6"/>
    </source>
</evidence>
<evidence type="ECO:0000256" key="2">
    <source>
        <dbReference type="SAM" id="MobiDB-lite"/>
    </source>
</evidence>
<evidence type="ECO:0000305" key="3"/>
<evidence type="ECO:0000312" key="4">
    <source>
        <dbReference type="EMBL" id="AAQ14794.1"/>
    </source>
</evidence>
<evidence type="ECO:0000312" key="5">
    <source>
        <dbReference type="Proteomes" id="UP000009070"/>
    </source>
</evidence>
<reference key="1">
    <citation type="journal article" date="2010" name="Viruses">
        <title>Complete genomic sequence of bacteriophage felix o1.</title>
        <authorList>
            <person name="Whichard J.M."/>
            <person name="Weigt L.A."/>
            <person name="Borris D.J."/>
            <person name="Li L.L."/>
            <person name="Zhang Q."/>
            <person name="Kapur V."/>
            <person name="Pierson F.W."/>
            <person name="Lingohr E.J."/>
            <person name="She Y.M."/>
            <person name="Kropinski A.M."/>
            <person name="Sriranganathan N."/>
        </authorList>
    </citation>
    <scope>NUCLEOTIDE SEQUENCE [GENOMIC DNA]</scope>
    <source>
        <strain evidence="4">Felix O1-VT1</strain>
    </source>
</reference>